<gene>
    <name evidence="1" type="primary">rplK</name>
    <name type="ordered locus">Dvul_0443</name>
</gene>
<keyword id="KW-0488">Methylation</keyword>
<keyword id="KW-0687">Ribonucleoprotein</keyword>
<keyword id="KW-0689">Ribosomal protein</keyword>
<keyword id="KW-0694">RNA-binding</keyword>
<keyword id="KW-0699">rRNA-binding</keyword>
<evidence type="ECO:0000255" key="1">
    <source>
        <dbReference type="HAMAP-Rule" id="MF_00736"/>
    </source>
</evidence>
<evidence type="ECO:0000305" key="2"/>
<proteinExistence type="inferred from homology"/>
<feature type="chain" id="PRO_1000046173" description="Large ribosomal subunit protein uL11">
    <location>
        <begin position="1"/>
        <end position="140"/>
    </location>
</feature>
<accession>A1VAK0</accession>
<sequence>MAKKEVAKIKLQIPAGAANPSPPVGPALGQHGLNIMAFCKEFNAKTMEQKGMITPVVITVYADRSFSFITKTPPASVLLIKAAKLEKGSGEPNRNKVGSVTMAQVEEIAALKMPDLTAKDLEAAKRNILGTARSMGIEVK</sequence>
<comment type="function">
    <text evidence="1">Forms part of the ribosomal stalk which helps the ribosome interact with GTP-bound translation factors.</text>
</comment>
<comment type="subunit">
    <text evidence="1">Part of the ribosomal stalk of the 50S ribosomal subunit. Interacts with L10 and the large rRNA to form the base of the stalk. L10 forms an elongated spine to which L12 dimers bind in a sequential fashion forming a multimeric L10(L12)X complex.</text>
</comment>
<comment type="PTM">
    <text evidence="1">One or more lysine residues are methylated.</text>
</comment>
<comment type="similarity">
    <text evidence="1">Belongs to the universal ribosomal protein uL11 family.</text>
</comment>
<name>RL11_NITV4</name>
<organism>
    <name type="scientific">Nitratidesulfovibrio vulgaris (strain DP4)</name>
    <name type="common">Desulfovibrio vulgaris</name>
    <dbReference type="NCBI Taxonomy" id="391774"/>
    <lineage>
        <taxon>Bacteria</taxon>
        <taxon>Pseudomonadati</taxon>
        <taxon>Thermodesulfobacteriota</taxon>
        <taxon>Desulfovibrionia</taxon>
        <taxon>Desulfovibrionales</taxon>
        <taxon>Desulfovibrionaceae</taxon>
        <taxon>Nitratidesulfovibrio</taxon>
    </lineage>
</organism>
<dbReference type="EMBL" id="CP000527">
    <property type="protein sequence ID" value="ABM27466.1"/>
    <property type="molecule type" value="Genomic_DNA"/>
</dbReference>
<dbReference type="RefSeq" id="WP_010940184.1">
    <property type="nucleotide sequence ID" value="NC_008751.1"/>
</dbReference>
<dbReference type="SMR" id="A1VAK0"/>
<dbReference type="KEGG" id="dvl:Dvul_0443"/>
<dbReference type="HOGENOM" id="CLU_074237_2_0_7"/>
<dbReference type="Proteomes" id="UP000009173">
    <property type="component" value="Chromosome"/>
</dbReference>
<dbReference type="GO" id="GO:0022625">
    <property type="term" value="C:cytosolic large ribosomal subunit"/>
    <property type="evidence" value="ECO:0007669"/>
    <property type="project" value="TreeGrafter"/>
</dbReference>
<dbReference type="GO" id="GO:0070180">
    <property type="term" value="F:large ribosomal subunit rRNA binding"/>
    <property type="evidence" value="ECO:0007669"/>
    <property type="project" value="UniProtKB-UniRule"/>
</dbReference>
<dbReference type="GO" id="GO:0003735">
    <property type="term" value="F:structural constituent of ribosome"/>
    <property type="evidence" value="ECO:0007669"/>
    <property type="project" value="InterPro"/>
</dbReference>
<dbReference type="GO" id="GO:0006412">
    <property type="term" value="P:translation"/>
    <property type="evidence" value="ECO:0007669"/>
    <property type="project" value="UniProtKB-UniRule"/>
</dbReference>
<dbReference type="CDD" id="cd00349">
    <property type="entry name" value="Ribosomal_L11"/>
    <property type="match status" value="1"/>
</dbReference>
<dbReference type="FunFam" id="1.10.10.250:FF:000001">
    <property type="entry name" value="50S ribosomal protein L11"/>
    <property type="match status" value="1"/>
</dbReference>
<dbReference type="FunFam" id="3.30.1550.10:FF:000001">
    <property type="entry name" value="50S ribosomal protein L11"/>
    <property type="match status" value="1"/>
</dbReference>
<dbReference type="Gene3D" id="1.10.10.250">
    <property type="entry name" value="Ribosomal protein L11, C-terminal domain"/>
    <property type="match status" value="1"/>
</dbReference>
<dbReference type="Gene3D" id="3.30.1550.10">
    <property type="entry name" value="Ribosomal protein L11/L12, N-terminal domain"/>
    <property type="match status" value="1"/>
</dbReference>
<dbReference type="HAMAP" id="MF_00736">
    <property type="entry name" value="Ribosomal_uL11"/>
    <property type="match status" value="1"/>
</dbReference>
<dbReference type="InterPro" id="IPR000911">
    <property type="entry name" value="Ribosomal_uL11"/>
</dbReference>
<dbReference type="InterPro" id="IPR006519">
    <property type="entry name" value="Ribosomal_uL11_bac-typ"/>
</dbReference>
<dbReference type="InterPro" id="IPR020783">
    <property type="entry name" value="Ribosomal_uL11_C"/>
</dbReference>
<dbReference type="InterPro" id="IPR036769">
    <property type="entry name" value="Ribosomal_uL11_C_sf"/>
</dbReference>
<dbReference type="InterPro" id="IPR020784">
    <property type="entry name" value="Ribosomal_uL11_N"/>
</dbReference>
<dbReference type="InterPro" id="IPR036796">
    <property type="entry name" value="Ribosomal_uL11_N_sf"/>
</dbReference>
<dbReference type="NCBIfam" id="TIGR01632">
    <property type="entry name" value="L11_bact"/>
    <property type="match status" value="1"/>
</dbReference>
<dbReference type="PANTHER" id="PTHR11661">
    <property type="entry name" value="60S RIBOSOMAL PROTEIN L12"/>
    <property type="match status" value="1"/>
</dbReference>
<dbReference type="PANTHER" id="PTHR11661:SF1">
    <property type="entry name" value="LARGE RIBOSOMAL SUBUNIT PROTEIN UL11M"/>
    <property type="match status" value="1"/>
</dbReference>
<dbReference type="Pfam" id="PF00298">
    <property type="entry name" value="Ribosomal_L11"/>
    <property type="match status" value="1"/>
</dbReference>
<dbReference type="Pfam" id="PF03946">
    <property type="entry name" value="Ribosomal_L11_N"/>
    <property type="match status" value="1"/>
</dbReference>
<dbReference type="SMART" id="SM00649">
    <property type="entry name" value="RL11"/>
    <property type="match status" value="1"/>
</dbReference>
<dbReference type="SUPFAM" id="SSF54747">
    <property type="entry name" value="Ribosomal L11/L12e N-terminal domain"/>
    <property type="match status" value="1"/>
</dbReference>
<dbReference type="SUPFAM" id="SSF46906">
    <property type="entry name" value="Ribosomal protein L11, C-terminal domain"/>
    <property type="match status" value="1"/>
</dbReference>
<protein>
    <recommendedName>
        <fullName evidence="1">Large ribosomal subunit protein uL11</fullName>
    </recommendedName>
    <alternativeName>
        <fullName evidence="2">50S ribosomal protein L11</fullName>
    </alternativeName>
</protein>
<reference key="1">
    <citation type="journal article" date="2009" name="Environ. Microbiol.">
        <title>Contribution of mobile genetic elements to Desulfovibrio vulgaris genome plasticity.</title>
        <authorList>
            <person name="Walker C.B."/>
            <person name="Stolyar S."/>
            <person name="Chivian D."/>
            <person name="Pinel N."/>
            <person name="Gabster J.A."/>
            <person name="Dehal P.S."/>
            <person name="He Z."/>
            <person name="Yang Z.K."/>
            <person name="Yen H.C."/>
            <person name="Zhou J."/>
            <person name="Wall J.D."/>
            <person name="Hazen T.C."/>
            <person name="Arkin A.P."/>
            <person name="Stahl D.A."/>
        </authorList>
    </citation>
    <scope>NUCLEOTIDE SEQUENCE [LARGE SCALE GENOMIC DNA]</scope>
    <source>
        <strain>DP4</strain>
    </source>
</reference>